<feature type="chain" id="PRO_0000183617" description="Cytochrome c oxidase subunit 2">
    <location>
        <begin position="1"/>
        <end position="227"/>
    </location>
</feature>
<feature type="topological domain" description="Mitochondrial intermembrane" evidence="3">
    <location>
        <begin position="1"/>
        <end position="14"/>
    </location>
</feature>
<feature type="transmembrane region" description="Helical; Name=I" evidence="3">
    <location>
        <begin position="15"/>
        <end position="45"/>
    </location>
</feature>
<feature type="topological domain" description="Mitochondrial matrix" evidence="3">
    <location>
        <begin position="46"/>
        <end position="59"/>
    </location>
</feature>
<feature type="transmembrane region" description="Helical; Name=II" evidence="3">
    <location>
        <begin position="60"/>
        <end position="87"/>
    </location>
</feature>
<feature type="topological domain" description="Mitochondrial intermembrane" evidence="3">
    <location>
        <begin position="88"/>
        <end position="227"/>
    </location>
</feature>
<feature type="binding site" evidence="3">
    <location>
        <position position="161"/>
    </location>
    <ligand>
        <name>Cu cation</name>
        <dbReference type="ChEBI" id="CHEBI:23378"/>
        <label>A1</label>
    </ligand>
</feature>
<feature type="binding site" evidence="3">
    <location>
        <position position="196"/>
    </location>
    <ligand>
        <name>Cu cation</name>
        <dbReference type="ChEBI" id="CHEBI:23378"/>
        <label>A1</label>
    </ligand>
</feature>
<feature type="binding site" evidence="3">
    <location>
        <position position="196"/>
    </location>
    <ligand>
        <name>Cu cation</name>
        <dbReference type="ChEBI" id="CHEBI:23378"/>
        <label>A2</label>
    </ligand>
</feature>
<feature type="binding site" evidence="3">
    <location>
        <position position="198"/>
    </location>
    <ligand>
        <name>Cu cation</name>
        <dbReference type="ChEBI" id="CHEBI:23378"/>
        <label>A2</label>
    </ligand>
</feature>
<feature type="binding site" evidence="3">
    <location>
        <position position="198"/>
    </location>
    <ligand>
        <name>Mg(2+)</name>
        <dbReference type="ChEBI" id="CHEBI:18420"/>
        <note>ligand shared with MT-CO1</note>
    </ligand>
</feature>
<feature type="binding site" evidence="3">
    <location>
        <position position="200"/>
    </location>
    <ligand>
        <name>Cu cation</name>
        <dbReference type="ChEBI" id="CHEBI:23378"/>
        <label>A1</label>
    </ligand>
</feature>
<feature type="binding site" evidence="3">
    <location>
        <position position="200"/>
    </location>
    <ligand>
        <name>Cu cation</name>
        <dbReference type="ChEBI" id="CHEBI:23378"/>
        <label>A2</label>
    </ligand>
</feature>
<feature type="binding site" evidence="3">
    <location>
        <position position="204"/>
    </location>
    <ligand>
        <name>Cu cation</name>
        <dbReference type="ChEBI" id="CHEBI:23378"/>
        <label>A2</label>
    </ligand>
</feature>
<feature type="binding site" evidence="3">
    <location>
        <position position="207"/>
    </location>
    <ligand>
        <name>Cu cation</name>
        <dbReference type="ChEBI" id="CHEBI:23378"/>
        <label>A1</label>
    </ligand>
</feature>
<feature type="sequence conflict" description="In Ref. 1; AAA20567." evidence="4" ref="1">
    <original>T</original>
    <variation>A</variation>
    <location>
        <position position="91"/>
    </location>
</feature>
<name>COX2_LEMCA</name>
<sequence>MAYPVQLGFQDAASPIMEELLYFHDHTLMIMFLISSLVLYIISLMLTTELMHTNTMDAQEVETVWTILPAAILILIALPSLRILYMMDEITTPSLTLKTMGHQWYWSYEYTDYEDLCFDSYMTPSSDLKPGELRLLEVDNRVVLPTELAVRMLISSEDVLHSWTVPSLGVKTDAIPGRLNQATLMASRPGVYYGQCSEICGANHSFMPIVLELVPLKHFEEWLLSML</sequence>
<protein>
    <recommendedName>
        <fullName>Cytochrome c oxidase subunit 2</fullName>
        <ecNumber>7.1.1.9</ecNumber>
    </recommendedName>
    <alternativeName>
        <fullName>Cytochrome c oxidase polypeptide II</fullName>
    </alternativeName>
</protein>
<comment type="function">
    <text evidence="2">Component of the cytochrome c oxidase, the last enzyme in the mitochondrial electron transport chain which drives oxidative phosphorylation. The respiratory chain contains 3 multisubunit complexes succinate dehydrogenase (complex II, CII), ubiquinol-cytochrome c oxidoreductase (cytochrome b-c1 complex, complex III, CIII) and cytochrome c oxidase (complex IV, CIV), that cooperate to transfer electrons derived from NADH and succinate to molecular oxygen, creating an electrochemical gradient over the inner membrane that drives transmembrane transport and the ATP synthase. Cytochrome c oxidase is the component of the respiratory chain that catalyzes the reduction of oxygen to water. Electrons originating from reduced cytochrome c in the intermembrane space (IMS) are transferred via the dinuclear copper A center (CU(A)) of subunit 2 and heme A of subunit 1 to the active site in subunit 1, a binuclear center (BNC) formed by heme A3 and copper B (CU(B)). The BNC reduces molecular oxygen to 2 water molecules using 4 electrons from cytochrome c in the IMS and 4 protons from the mitochondrial matrix.</text>
</comment>
<comment type="catalytic activity">
    <reaction evidence="2">
        <text>4 Fe(II)-[cytochrome c] + O2 + 8 H(+)(in) = 4 Fe(III)-[cytochrome c] + 2 H2O + 4 H(+)(out)</text>
        <dbReference type="Rhea" id="RHEA:11436"/>
        <dbReference type="Rhea" id="RHEA-COMP:10350"/>
        <dbReference type="Rhea" id="RHEA-COMP:14399"/>
        <dbReference type="ChEBI" id="CHEBI:15377"/>
        <dbReference type="ChEBI" id="CHEBI:15378"/>
        <dbReference type="ChEBI" id="CHEBI:15379"/>
        <dbReference type="ChEBI" id="CHEBI:29033"/>
        <dbReference type="ChEBI" id="CHEBI:29034"/>
        <dbReference type="EC" id="7.1.1.9"/>
    </reaction>
    <physiologicalReaction direction="left-to-right" evidence="2">
        <dbReference type="Rhea" id="RHEA:11437"/>
    </physiologicalReaction>
</comment>
<comment type="cofactor">
    <cofactor evidence="3">
        <name>Cu cation</name>
        <dbReference type="ChEBI" id="CHEBI:23378"/>
    </cofactor>
    <text evidence="3">Binds a dinuclear copper A center per subunit.</text>
</comment>
<comment type="subunit">
    <text evidence="1 3">Component of the cytochrome c oxidase (complex IV, CIV), a multisubunit enzyme composed of 14 subunits. The complex is composed of a catalytic core of 3 subunits MT-CO1, MT-CO2 and MT-CO3, encoded in the mitochondrial DNA, and 11 supernumerary subunits COX4I, COX5A, COX5B, COX6A, COX6B, COX6C, COX7A, COX7B, COX7C, COX8 and NDUFA4, which are encoded in the nuclear genome. The complex exists as a monomer or a dimer and forms supercomplexes (SCs) in the inner mitochondrial membrane with NADH-ubiquinone oxidoreductase (complex I, CI) and ubiquinol-cytochrome c oxidoreductase (cytochrome b-c1 complex, complex III, CIII), resulting in different assemblies (supercomplex SCI(1)III(2)IV(1) and megacomplex MCI(2)III(2)IV(2)) (By similarity). Found in a complex with TMEM177, COA6, COX18, COX20, SCO1 and SCO2. Interacts with TMEM177 in a COX20-dependent manner. Interacts with COX20. Interacts with COX16 (By similarity).</text>
</comment>
<comment type="subcellular location">
    <subcellularLocation>
        <location evidence="3">Mitochondrion inner membrane</location>
        <topology evidence="3">Multi-pass membrane protein</topology>
    </subcellularLocation>
</comment>
<comment type="similarity">
    <text evidence="4">Belongs to the cytochrome c oxidase subunit 2 family.</text>
</comment>
<dbReference type="EC" id="7.1.1.9"/>
<dbReference type="EMBL" id="L22780">
    <property type="protein sequence ID" value="AAA20567.1"/>
    <property type="molecule type" value="Genomic_DNA"/>
</dbReference>
<dbReference type="EMBL" id="AJ421451">
    <property type="protein sequence ID" value="CAD13424.1"/>
    <property type="molecule type" value="Genomic_DNA"/>
</dbReference>
<dbReference type="PIR" id="I61841">
    <property type="entry name" value="I61841"/>
</dbReference>
<dbReference type="RefSeq" id="NP_659291.1">
    <property type="nucleotide sequence ID" value="NC_004025.1"/>
</dbReference>
<dbReference type="SMR" id="P98035"/>
<dbReference type="OrthoDB" id="539285at2759"/>
<dbReference type="GO" id="GO:0005743">
    <property type="term" value="C:mitochondrial inner membrane"/>
    <property type="evidence" value="ECO:0007669"/>
    <property type="project" value="UniProtKB-SubCell"/>
</dbReference>
<dbReference type="GO" id="GO:0045277">
    <property type="term" value="C:respiratory chain complex IV"/>
    <property type="evidence" value="ECO:0000250"/>
    <property type="project" value="UniProtKB"/>
</dbReference>
<dbReference type="GO" id="GO:0005507">
    <property type="term" value="F:copper ion binding"/>
    <property type="evidence" value="ECO:0007669"/>
    <property type="project" value="InterPro"/>
</dbReference>
<dbReference type="GO" id="GO:0004129">
    <property type="term" value="F:cytochrome-c oxidase activity"/>
    <property type="evidence" value="ECO:0007669"/>
    <property type="project" value="UniProtKB-EC"/>
</dbReference>
<dbReference type="GO" id="GO:0042773">
    <property type="term" value="P:ATP synthesis coupled electron transport"/>
    <property type="evidence" value="ECO:0007669"/>
    <property type="project" value="TreeGrafter"/>
</dbReference>
<dbReference type="CDD" id="cd13912">
    <property type="entry name" value="CcO_II_C"/>
    <property type="match status" value="1"/>
</dbReference>
<dbReference type="FunFam" id="1.10.287.90:FF:000001">
    <property type="entry name" value="Cytochrome c oxidase subunit 2"/>
    <property type="match status" value="1"/>
</dbReference>
<dbReference type="FunFam" id="2.60.40.420:FF:000001">
    <property type="entry name" value="Cytochrome c oxidase subunit 2"/>
    <property type="match status" value="1"/>
</dbReference>
<dbReference type="Gene3D" id="1.10.287.90">
    <property type="match status" value="1"/>
</dbReference>
<dbReference type="Gene3D" id="2.60.40.420">
    <property type="entry name" value="Cupredoxins - blue copper proteins"/>
    <property type="match status" value="1"/>
</dbReference>
<dbReference type="InterPro" id="IPR045187">
    <property type="entry name" value="CcO_II"/>
</dbReference>
<dbReference type="InterPro" id="IPR002429">
    <property type="entry name" value="CcO_II-like_C"/>
</dbReference>
<dbReference type="InterPro" id="IPR034210">
    <property type="entry name" value="CcO_II_C"/>
</dbReference>
<dbReference type="InterPro" id="IPR001505">
    <property type="entry name" value="Copper_CuA"/>
</dbReference>
<dbReference type="InterPro" id="IPR008972">
    <property type="entry name" value="Cupredoxin"/>
</dbReference>
<dbReference type="InterPro" id="IPR014222">
    <property type="entry name" value="Cyt_c_oxidase_su2"/>
</dbReference>
<dbReference type="InterPro" id="IPR011759">
    <property type="entry name" value="Cyt_c_oxidase_su2_TM_dom"/>
</dbReference>
<dbReference type="InterPro" id="IPR036257">
    <property type="entry name" value="Cyt_c_oxidase_su2_TM_sf"/>
</dbReference>
<dbReference type="NCBIfam" id="TIGR02866">
    <property type="entry name" value="CoxB"/>
    <property type="match status" value="1"/>
</dbReference>
<dbReference type="PANTHER" id="PTHR22888:SF9">
    <property type="entry name" value="CYTOCHROME C OXIDASE SUBUNIT 2"/>
    <property type="match status" value="1"/>
</dbReference>
<dbReference type="PANTHER" id="PTHR22888">
    <property type="entry name" value="CYTOCHROME C OXIDASE, SUBUNIT II"/>
    <property type="match status" value="1"/>
</dbReference>
<dbReference type="Pfam" id="PF00116">
    <property type="entry name" value="COX2"/>
    <property type="match status" value="1"/>
</dbReference>
<dbReference type="Pfam" id="PF02790">
    <property type="entry name" value="COX2_TM"/>
    <property type="match status" value="1"/>
</dbReference>
<dbReference type="PRINTS" id="PR01166">
    <property type="entry name" value="CYCOXIDASEII"/>
</dbReference>
<dbReference type="SUPFAM" id="SSF49503">
    <property type="entry name" value="Cupredoxins"/>
    <property type="match status" value="1"/>
</dbReference>
<dbReference type="SUPFAM" id="SSF81464">
    <property type="entry name" value="Cytochrome c oxidase subunit II-like, transmembrane region"/>
    <property type="match status" value="1"/>
</dbReference>
<dbReference type="PROSITE" id="PS00078">
    <property type="entry name" value="COX2"/>
    <property type="match status" value="1"/>
</dbReference>
<dbReference type="PROSITE" id="PS50857">
    <property type="entry name" value="COX2_CUA"/>
    <property type="match status" value="1"/>
</dbReference>
<dbReference type="PROSITE" id="PS50999">
    <property type="entry name" value="COX2_TM"/>
    <property type="match status" value="1"/>
</dbReference>
<proteinExistence type="inferred from homology"/>
<keyword id="KW-0186">Copper</keyword>
<keyword id="KW-0249">Electron transport</keyword>
<keyword id="KW-0460">Magnesium</keyword>
<keyword id="KW-0472">Membrane</keyword>
<keyword id="KW-0479">Metal-binding</keyword>
<keyword id="KW-0496">Mitochondrion</keyword>
<keyword id="KW-0999">Mitochondrion inner membrane</keyword>
<keyword id="KW-0679">Respiratory chain</keyword>
<keyword id="KW-1278">Translocase</keyword>
<keyword id="KW-0812">Transmembrane</keyword>
<keyword id="KW-1133">Transmembrane helix</keyword>
<keyword id="KW-0813">Transport</keyword>
<geneLocation type="mitochondrion"/>
<accession>P98035</accession>
<accession>Q8LX29</accession>
<organism>
    <name type="scientific">Lemur catta</name>
    <name type="common">Ring-tailed lemur</name>
    <dbReference type="NCBI Taxonomy" id="9447"/>
    <lineage>
        <taxon>Eukaryota</taxon>
        <taxon>Metazoa</taxon>
        <taxon>Chordata</taxon>
        <taxon>Craniata</taxon>
        <taxon>Vertebrata</taxon>
        <taxon>Euteleostomi</taxon>
        <taxon>Mammalia</taxon>
        <taxon>Eutheria</taxon>
        <taxon>Euarchontoglires</taxon>
        <taxon>Primates</taxon>
        <taxon>Strepsirrhini</taxon>
        <taxon>Lemuriformes</taxon>
        <taxon>Lemuridae</taxon>
        <taxon>Lemur</taxon>
    </lineage>
</organism>
<gene>
    <name type="primary">MT-CO2</name>
    <name type="synonym">COII</name>
    <name type="synonym">COX2</name>
    <name type="synonym">COXII</name>
    <name type="synonym">MTCO2</name>
</gene>
<evidence type="ECO:0000250" key="1">
    <source>
        <dbReference type="UniProtKB" id="P00403"/>
    </source>
</evidence>
<evidence type="ECO:0000250" key="2">
    <source>
        <dbReference type="UniProtKB" id="P00410"/>
    </source>
</evidence>
<evidence type="ECO:0000250" key="3">
    <source>
        <dbReference type="UniProtKB" id="P68530"/>
    </source>
</evidence>
<evidence type="ECO:0000305" key="4"/>
<reference key="1">
    <citation type="journal article" date="1994" name="J. Mol. Evol.">
        <title>Evolution of the primate cytochrome c oxidase subunit II gene.</title>
        <authorList>
            <person name="Adkins R.M."/>
            <person name="Honeycutt R.L."/>
        </authorList>
    </citation>
    <scope>NUCLEOTIDE SEQUENCE [GENOMIC DNA]</scope>
</reference>
<reference key="2">
    <citation type="journal article" date="2002" name="Proc. Natl. Acad. Sci. U.S.A.">
        <title>Mammalian mitogenomic relationships and the root of the eutherian tree.</title>
        <authorList>
            <person name="Arnason U."/>
            <person name="Adegoke J.A."/>
            <person name="Bodin K."/>
            <person name="Born E.W."/>
            <person name="Esa Y.B."/>
            <person name="Gullberg A."/>
            <person name="Nilsson M."/>
            <person name="Short R.V."/>
            <person name="Xu X."/>
            <person name="Janke A."/>
        </authorList>
    </citation>
    <scope>NUCLEOTIDE SEQUENCE [GENOMIC DNA]</scope>
</reference>